<feature type="chain" id="PRO_1000059443" description="1-deoxy-D-xylulose-5-phosphate synthase">
    <location>
        <begin position="1"/>
        <end position="601"/>
    </location>
</feature>
<feature type="binding site" evidence="1">
    <location>
        <position position="63"/>
    </location>
    <ligand>
        <name>thiamine diphosphate</name>
        <dbReference type="ChEBI" id="CHEBI:58937"/>
    </ligand>
</feature>
<feature type="binding site" evidence="1">
    <location>
        <begin position="104"/>
        <end position="106"/>
    </location>
    <ligand>
        <name>thiamine diphosphate</name>
        <dbReference type="ChEBI" id="CHEBI:58937"/>
    </ligand>
</feature>
<feature type="binding site" evidence="1">
    <location>
        <position position="135"/>
    </location>
    <ligand>
        <name>Mg(2+)</name>
        <dbReference type="ChEBI" id="CHEBI:18420"/>
    </ligand>
</feature>
<feature type="binding site" evidence="1">
    <location>
        <begin position="136"/>
        <end position="137"/>
    </location>
    <ligand>
        <name>thiamine diphosphate</name>
        <dbReference type="ChEBI" id="CHEBI:58937"/>
    </ligand>
</feature>
<feature type="binding site" evidence="1">
    <location>
        <position position="164"/>
    </location>
    <ligand>
        <name>Mg(2+)</name>
        <dbReference type="ChEBI" id="CHEBI:18420"/>
    </ligand>
</feature>
<feature type="binding site" evidence="1">
    <location>
        <position position="164"/>
    </location>
    <ligand>
        <name>thiamine diphosphate</name>
        <dbReference type="ChEBI" id="CHEBI:58937"/>
    </ligand>
</feature>
<feature type="binding site" evidence="1">
    <location>
        <position position="272"/>
    </location>
    <ligand>
        <name>thiamine diphosphate</name>
        <dbReference type="ChEBI" id="CHEBI:58937"/>
    </ligand>
</feature>
<feature type="binding site" evidence="1">
    <location>
        <position position="353"/>
    </location>
    <ligand>
        <name>thiamine diphosphate</name>
        <dbReference type="ChEBI" id="CHEBI:58937"/>
    </ligand>
</feature>
<proteinExistence type="inferred from homology"/>
<reference key="1">
    <citation type="journal article" date="2007" name="PLoS ONE">
        <title>The complete genome sequence and analysis of the Epsilonproteobacterium Arcobacter butzleri.</title>
        <authorList>
            <person name="Miller W.G."/>
            <person name="Parker C.T."/>
            <person name="Rubenfield M."/>
            <person name="Mendz G.L."/>
            <person name="Woesten M.M.S.M."/>
            <person name="Ussery D.W."/>
            <person name="Stolz J.F."/>
            <person name="Binnewies T.T."/>
            <person name="Hallin P.F."/>
            <person name="Wang G."/>
            <person name="Malek J.A."/>
            <person name="Rogosin A."/>
            <person name="Stanker L.H."/>
            <person name="Mandrell R.E."/>
        </authorList>
    </citation>
    <scope>NUCLEOTIDE SEQUENCE [LARGE SCALE GENOMIC DNA]</scope>
    <source>
        <strain>RM4018</strain>
    </source>
</reference>
<dbReference type="EC" id="2.2.1.7" evidence="1"/>
<dbReference type="EMBL" id="CP000361">
    <property type="protein sequence ID" value="ABV68353.1"/>
    <property type="molecule type" value="Genomic_DNA"/>
</dbReference>
<dbReference type="RefSeq" id="WP_012148001.1">
    <property type="nucleotide sequence ID" value="NC_009850.1"/>
</dbReference>
<dbReference type="SMR" id="A8EWN0"/>
<dbReference type="STRING" id="367737.Abu_2139"/>
<dbReference type="GeneID" id="24305214"/>
<dbReference type="KEGG" id="abu:Abu_2139"/>
<dbReference type="eggNOG" id="COG1154">
    <property type="taxonomic scope" value="Bacteria"/>
</dbReference>
<dbReference type="HOGENOM" id="CLU_009227_1_4_7"/>
<dbReference type="UniPathway" id="UPA00064">
    <property type="reaction ID" value="UER00091"/>
</dbReference>
<dbReference type="Proteomes" id="UP000001136">
    <property type="component" value="Chromosome"/>
</dbReference>
<dbReference type="GO" id="GO:0005829">
    <property type="term" value="C:cytosol"/>
    <property type="evidence" value="ECO:0007669"/>
    <property type="project" value="TreeGrafter"/>
</dbReference>
<dbReference type="GO" id="GO:0008661">
    <property type="term" value="F:1-deoxy-D-xylulose-5-phosphate synthase activity"/>
    <property type="evidence" value="ECO:0007669"/>
    <property type="project" value="UniProtKB-UniRule"/>
</dbReference>
<dbReference type="GO" id="GO:0000287">
    <property type="term" value="F:magnesium ion binding"/>
    <property type="evidence" value="ECO:0007669"/>
    <property type="project" value="UniProtKB-UniRule"/>
</dbReference>
<dbReference type="GO" id="GO:0030976">
    <property type="term" value="F:thiamine pyrophosphate binding"/>
    <property type="evidence" value="ECO:0007669"/>
    <property type="project" value="UniProtKB-UniRule"/>
</dbReference>
<dbReference type="GO" id="GO:0052865">
    <property type="term" value="P:1-deoxy-D-xylulose 5-phosphate biosynthetic process"/>
    <property type="evidence" value="ECO:0007669"/>
    <property type="project" value="UniProtKB-UniPathway"/>
</dbReference>
<dbReference type="GO" id="GO:0019288">
    <property type="term" value="P:isopentenyl diphosphate biosynthetic process, methylerythritol 4-phosphate pathway"/>
    <property type="evidence" value="ECO:0007669"/>
    <property type="project" value="TreeGrafter"/>
</dbReference>
<dbReference type="GO" id="GO:0016114">
    <property type="term" value="P:terpenoid biosynthetic process"/>
    <property type="evidence" value="ECO:0007669"/>
    <property type="project" value="UniProtKB-UniRule"/>
</dbReference>
<dbReference type="GO" id="GO:0009228">
    <property type="term" value="P:thiamine biosynthetic process"/>
    <property type="evidence" value="ECO:0007669"/>
    <property type="project" value="UniProtKB-UniRule"/>
</dbReference>
<dbReference type="CDD" id="cd02007">
    <property type="entry name" value="TPP_DXS"/>
    <property type="match status" value="1"/>
</dbReference>
<dbReference type="CDD" id="cd07033">
    <property type="entry name" value="TPP_PYR_DXS_TK_like"/>
    <property type="match status" value="1"/>
</dbReference>
<dbReference type="FunFam" id="3.40.50.970:FF:000005">
    <property type="entry name" value="1-deoxy-D-xylulose-5-phosphate synthase"/>
    <property type="match status" value="1"/>
</dbReference>
<dbReference type="Gene3D" id="3.40.50.920">
    <property type="match status" value="1"/>
</dbReference>
<dbReference type="Gene3D" id="3.40.50.970">
    <property type="match status" value="2"/>
</dbReference>
<dbReference type="HAMAP" id="MF_00315">
    <property type="entry name" value="DXP_synth"/>
    <property type="match status" value="1"/>
</dbReference>
<dbReference type="InterPro" id="IPR005477">
    <property type="entry name" value="Dxylulose-5-P_synthase"/>
</dbReference>
<dbReference type="InterPro" id="IPR029061">
    <property type="entry name" value="THDP-binding"/>
</dbReference>
<dbReference type="InterPro" id="IPR009014">
    <property type="entry name" value="Transketo_C/PFOR_II"/>
</dbReference>
<dbReference type="InterPro" id="IPR005475">
    <property type="entry name" value="Transketolase-like_Pyr-bd"/>
</dbReference>
<dbReference type="InterPro" id="IPR020826">
    <property type="entry name" value="Transketolase_BS"/>
</dbReference>
<dbReference type="InterPro" id="IPR033248">
    <property type="entry name" value="Transketolase_C"/>
</dbReference>
<dbReference type="InterPro" id="IPR049557">
    <property type="entry name" value="Transketolase_CS"/>
</dbReference>
<dbReference type="NCBIfam" id="TIGR00204">
    <property type="entry name" value="dxs"/>
    <property type="match status" value="1"/>
</dbReference>
<dbReference type="NCBIfam" id="NF003933">
    <property type="entry name" value="PRK05444.2-2"/>
    <property type="match status" value="1"/>
</dbReference>
<dbReference type="PANTHER" id="PTHR43322">
    <property type="entry name" value="1-D-DEOXYXYLULOSE 5-PHOSPHATE SYNTHASE-RELATED"/>
    <property type="match status" value="1"/>
</dbReference>
<dbReference type="PANTHER" id="PTHR43322:SF5">
    <property type="entry name" value="1-DEOXY-D-XYLULOSE-5-PHOSPHATE SYNTHASE, CHLOROPLASTIC"/>
    <property type="match status" value="1"/>
</dbReference>
<dbReference type="Pfam" id="PF13292">
    <property type="entry name" value="DXP_synthase_N"/>
    <property type="match status" value="1"/>
</dbReference>
<dbReference type="Pfam" id="PF02779">
    <property type="entry name" value="Transket_pyr"/>
    <property type="match status" value="1"/>
</dbReference>
<dbReference type="Pfam" id="PF02780">
    <property type="entry name" value="Transketolase_C"/>
    <property type="match status" value="1"/>
</dbReference>
<dbReference type="SMART" id="SM00861">
    <property type="entry name" value="Transket_pyr"/>
    <property type="match status" value="1"/>
</dbReference>
<dbReference type="SUPFAM" id="SSF52518">
    <property type="entry name" value="Thiamin diphosphate-binding fold (THDP-binding)"/>
    <property type="match status" value="2"/>
</dbReference>
<dbReference type="SUPFAM" id="SSF52922">
    <property type="entry name" value="TK C-terminal domain-like"/>
    <property type="match status" value="1"/>
</dbReference>
<dbReference type="PROSITE" id="PS00801">
    <property type="entry name" value="TRANSKETOLASE_1"/>
    <property type="match status" value="1"/>
</dbReference>
<dbReference type="PROSITE" id="PS00802">
    <property type="entry name" value="TRANSKETOLASE_2"/>
    <property type="match status" value="1"/>
</dbReference>
<name>DXS_ALIB4</name>
<comment type="function">
    <text evidence="1">Catalyzes the acyloin condensation reaction between C atoms 2 and 3 of pyruvate and glyceraldehyde 3-phosphate to yield 1-deoxy-D-xylulose-5-phosphate (DXP).</text>
</comment>
<comment type="catalytic activity">
    <reaction evidence="1">
        <text>D-glyceraldehyde 3-phosphate + pyruvate + H(+) = 1-deoxy-D-xylulose 5-phosphate + CO2</text>
        <dbReference type="Rhea" id="RHEA:12605"/>
        <dbReference type="ChEBI" id="CHEBI:15361"/>
        <dbReference type="ChEBI" id="CHEBI:15378"/>
        <dbReference type="ChEBI" id="CHEBI:16526"/>
        <dbReference type="ChEBI" id="CHEBI:57792"/>
        <dbReference type="ChEBI" id="CHEBI:59776"/>
        <dbReference type="EC" id="2.2.1.7"/>
    </reaction>
</comment>
<comment type="cofactor">
    <cofactor evidence="1">
        <name>Mg(2+)</name>
        <dbReference type="ChEBI" id="CHEBI:18420"/>
    </cofactor>
    <text evidence="1">Binds 1 Mg(2+) ion per subunit.</text>
</comment>
<comment type="cofactor">
    <cofactor evidence="1">
        <name>thiamine diphosphate</name>
        <dbReference type="ChEBI" id="CHEBI:58937"/>
    </cofactor>
    <text evidence="1">Binds 1 thiamine pyrophosphate per subunit.</text>
</comment>
<comment type="pathway">
    <text evidence="1">Metabolic intermediate biosynthesis; 1-deoxy-D-xylulose 5-phosphate biosynthesis; 1-deoxy-D-xylulose 5-phosphate from D-glyceraldehyde 3-phosphate and pyruvate: step 1/1.</text>
</comment>
<comment type="subunit">
    <text evidence="1">Homodimer.</text>
</comment>
<comment type="similarity">
    <text evidence="1">Belongs to the transketolase family. DXPS subfamily.</text>
</comment>
<keyword id="KW-0414">Isoprene biosynthesis</keyword>
<keyword id="KW-0460">Magnesium</keyword>
<keyword id="KW-0479">Metal-binding</keyword>
<keyword id="KW-1185">Reference proteome</keyword>
<keyword id="KW-0784">Thiamine biosynthesis</keyword>
<keyword id="KW-0786">Thiamine pyrophosphate</keyword>
<keyword id="KW-0808">Transferase</keyword>
<accession>A8EWN0</accession>
<sequence>MDIKDKSLKELEELSSQIRERIIDVVSRKGGHFSSTLGAVELTLGMHYVFDAYSDPFIFDVSHQCYPHKLLTSRWDEFETIRQFGGLSGFTKPKESPADYFVAGHSSTSISLAVGAAKSIKLKKENKVPIVMIGDGSMSAGMVYEALNELGDLKLPVVIILNDNEMSIAKPIGAISKYLSKILAGKYYQSFKSKVDKFIRKNMPEGTTYLAKRFEEAFKLITPGILFEEMGIDYIGPIDGHDLKEVIETLQIAKAMQKPVIVHAHTIKGKGYKIAEGQHEEWHGVGPFNIEDGEFIKKEAPKSATAVFSDALLNLACKYENVVGVTAAMPSGTGINKLMDEFPERFWDVAIAEQHAITSMAAMAKEGFKPFITIYSTFLQRGFDQIIHDVCLMNLPVVFAMDRAGIVGNDGETHQGAFDISFLRFIPNMVLFAPRDNETLEQSLEFAYNLNNPCAIRYPRGAFKKLNFVPTPFVLGKAEILKTGISNKLFIGYGAGVSRAIDTEALHNEDITVVDLRFVKPLDKNLLLELSKKYNDWYIFSDSQKQSGVGSAILEFLNDEKIHNVQLTSFEYNDKFIEHGDTKLVEQSLGLLPEQLVQKIK</sequence>
<protein>
    <recommendedName>
        <fullName evidence="1">1-deoxy-D-xylulose-5-phosphate synthase</fullName>
        <ecNumber evidence="1">2.2.1.7</ecNumber>
    </recommendedName>
    <alternativeName>
        <fullName evidence="1">1-deoxyxylulose-5-phosphate synthase</fullName>
        <shortName evidence="1">DXP synthase</shortName>
        <shortName evidence="1">DXPS</shortName>
    </alternativeName>
</protein>
<gene>
    <name evidence="1" type="primary">dxs</name>
    <name type="ordered locus">Abu_2139</name>
</gene>
<organism>
    <name type="scientific">Aliarcobacter butzleri (strain RM4018)</name>
    <name type="common">Arcobacter butzleri</name>
    <dbReference type="NCBI Taxonomy" id="367737"/>
    <lineage>
        <taxon>Bacteria</taxon>
        <taxon>Pseudomonadati</taxon>
        <taxon>Campylobacterota</taxon>
        <taxon>Epsilonproteobacteria</taxon>
        <taxon>Campylobacterales</taxon>
        <taxon>Arcobacteraceae</taxon>
        <taxon>Aliarcobacter</taxon>
    </lineage>
</organism>
<evidence type="ECO:0000255" key="1">
    <source>
        <dbReference type="HAMAP-Rule" id="MF_00315"/>
    </source>
</evidence>